<proteinExistence type="inferred from homology"/>
<gene>
    <name type="primary">clpB</name>
    <name type="ordered locus">RB9103</name>
</gene>
<comment type="function">
    <text evidence="1">Part of a stress-induced multi-chaperone system, it is involved in the recovery of the cell from heat-induced damage, in cooperation with DnaK, DnaJ and GrpE. Acts before DnaK, in the processing of protein aggregates. Protein binding stimulates the ATPase activity; ATP hydrolysis unfolds the denatured protein aggregates, which probably helps expose new hydrophobic binding sites on the surface of ClpB-bound aggregates, contributing to the solubilization and refolding of denatured protein aggregates by DnaK (By similarity).</text>
</comment>
<comment type="subunit">
    <text evidence="1">Homohexamer. The oligomerization is ATP-dependent (By similarity).</text>
</comment>
<comment type="subcellular location">
    <subcellularLocation>
        <location evidence="4">Cytoplasm</location>
    </subcellularLocation>
</comment>
<comment type="domain">
    <text evidence="1">The Clp repeat (R) domain probably functions as a substrate-discriminating domain, recruiting aggregated proteins to the ClpB hexamer and/or stabilizing bound proteins. The NBD2 domain is responsible for oligomerization, whereas the NBD1 domain stabilizes the hexamer probably in an ATP-dependent manner. The movement of the coiled-coil domain is essential for ClpB ability to rescue proteins from an aggregated state, probably by pulling apart large aggregated proteins, which are bound between the coiled-coils motifs of adjacent ClpB subunits in the functional hexamer (By similarity).</text>
</comment>
<comment type="similarity">
    <text evidence="4">Belongs to the ClpA/ClpB family.</text>
</comment>
<comment type="sequence caution" evidence="4">
    <conflict type="erroneous initiation">
        <sequence resource="EMBL-CDS" id="CAD76084"/>
    </conflict>
</comment>
<protein>
    <recommendedName>
        <fullName>Chaperone protein ClpB</fullName>
    </recommendedName>
</protein>
<accession>Q7UM33</accession>
<keyword id="KW-0067">ATP-binding</keyword>
<keyword id="KW-0143">Chaperone</keyword>
<keyword id="KW-0175">Coiled coil</keyword>
<keyword id="KW-0963">Cytoplasm</keyword>
<keyword id="KW-0547">Nucleotide-binding</keyword>
<keyword id="KW-1185">Reference proteome</keyword>
<keyword id="KW-0677">Repeat</keyword>
<keyword id="KW-0346">Stress response</keyword>
<sequence>MAFRIDKLTTQAQNVVAEAQAQATSAGNAEIDPLHVLSAAVNQRDGITTPLLEKINVDVPKLKSLLTSELEKLPHASGMGQARVSAKLQAALEASATSAESLKDEYVSTEHLLVGLARTDNKAKNLLSLLGVSDNDLLTAMSQIRGSARVTDPNAESTYQALEKFGIDLTQLAQSGKLDPVIGRDNEIRRVIQVLSRRTKNNPVLIGQPGVGKTAIAEGLALRIFEGDVPQSLKGKKVVSLDMGALVAGAKFRGDFEERLKSVLREVKDSDGKVILFIDELHLVVGAGNAEGSADAANLLKPELARGALRCIGATTLDEYRQHIEKDAALERRFQPVFVGEPNVEDTVAILRGLKPRYESHHGVRITDSALVAAANLSDRYIADRFLPDKAIDLIDEAASRLAMEKESVPEPIDRLQRRLRQLELVHRQLVDEQEASAVDKRVEVEEEMESAKAELASLKEQWETEKMGLDDVQSVRQEVDQLQHRFAQLDADAKEKQLRGESPEDAYSEMLQVQSRLRELQARIDEAEKHDDSADQTKEEPGDEKRRLLRKEVTEEEIAEVVSTWTGVPVTRMMETERAKLLVMEERLHQRVVGQDEAVTAVSDAVRRSRSGLQDPNRPIGSFLFLGPTGVGKTELCKALAEVMFDDESAMVRIDMSEFMERHSVSRLIGAPPGYVGYEEGGKLTEAVRRRPYAVILLDEMEKAHPDVFNVLLQVLDDGRLTDGQGRTVNFTNTVVVMTSNVGSQVIQRVTEEGGGEDEMRQAVEDALKARFLPEFLNRIDDTVIFHPLQQTQIRRIVQLQLEELRSRLAANGLSFEITDAAIDQIAEVGYDPAYGARPLKRVIQREVQNPLASAILKNSYAEGTTIKIDHDGDQFVFSG</sequence>
<evidence type="ECO:0000250" key="1"/>
<evidence type="ECO:0000255" key="2">
    <source>
        <dbReference type="PROSITE-ProRule" id="PRU01251"/>
    </source>
</evidence>
<evidence type="ECO:0000256" key="3">
    <source>
        <dbReference type="SAM" id="MobiDB-lite"/>
    </source>
</evidence>
<evidence type="ECO:0000305" key="4"/>
<reference key="1">
    <citation type="journal article" date="2003" name="Proc. Natl. Acad. Sci. U.S.A.">
        <title>Complete genome sequence of the marine planctomycete Pirellula sp. strain 1.</title>
        <authorList>
            <person name="Gloeckner F.O."/>
            <person name="Kube M."/>
            <person name="Bauer M."/>
            <person name="Teeling H."/>
            <person name="Lombardot T."/>
            <person name="Ludwig W."/>
            <person name="Gade D."/>
            <person name="Beck A."/>
            <person name="Borzym K."/>
            <person name="Heitmann K."/>
            <person name="Rabus R."/>
            <person name="Schlesner H."/>
            <person name="Amann R."/>
            <person name="Reinhardt R."/>
        </authorList>
    </citation>
    <scope>NUCLEOTIDE SEQUENCE [LARGE SCALE GENOMIC DNA]</scope>
    <source>
        <strain>DSM 10527 / NCIMB 13988 / SH1</strain>
    </source>
</reference>
<name>CLPB_RHOBA</name>
<organism>
    <name type="scientific">Rhodopirellula baltica (strain DSM 10527 / NCIMB 13988 / SH1)</name>
    <dbReference type="NCBI Taxonomy" id="243090"/>
    <lineage>
        <taxon>Bacteria</taxon>
        <taxon>Pseudomonadati</taxon>
        <taxon>Planctomycetota</taxon>
        <taxon>Planctomycetia</taxon>
        <taxon>Pirellulales</taxon>
        <taxon>Pirellulaceae</taxon>
        <taxon>Rhodopirellula</taxon>
    </lineage>
</organism>
<feature type="chain" id="PRO_0000191167" description="Chaperone protein ClpB">
    <location>
        <begin position="1"/>
        <end position="881"/>
    </location>
</feature>
<feature type="domain" description="Clp R" evidence="2">
    <location>
        <begin position="5"/>
        <end position="147"/>
    </location>
</feature>
<feature type="region of interest" description="Repeat 1" evidence="2">
    <location>
        <begin position="8"/>
        <end position="73"/>
    </location>
</feature>
<feature type="region of interest" description="Repeat 2" evidence="2">
    <location>
        <begin position="84"/>
        <end position="147"/>
    </location>
</feature>
<feature type="region of interest" description="NBD1" evidence="1">
    <location>
        <begin position="160"/>
        <end position="341"/>
    </location>
</feature>
<feature type="region of interest" description="Linker" evidence="1">
    <location>
        <begin position="342"/>
        <end position="568"/>
    </location>
</feature>
<feature type="region of interest" description="Disordered" evidence="3">
    <location>
        <begin position="528"/>
        <end position="548"/>
    </location>
</feature>
<feature type="region of interest" description="NBD2" evidence="1">
    <location>
        <begin position="578"/>
        <end position="789"/>
    </location>
</feature>
<feature type="region of interest" description="C-terminal" evidence="1">
    <location>
        <begin position="790"/>
        <end position="881"/>
    </location>
</feature>
<feature type="coiled-coil region" evidence="1">
    <location>
        <begin position="392"/>
        <end position="530"/>
    </location>
</feature>
<feature type="binding site" evidence="1">
    <location>
        <begin position="207"/>
        <end position="214"/>
    </location>
    <ligand>
        <name>ATP</name>
        <dbReference type="ChEBI" id="CHEBI:30616"/>
        <label>1</label>
    </ligand>
</feature>
<feature type="binding site" evidence="1">
    <location>
        <begin position="628"/>
        <end position="635"/>
    </location>
    <ligand>
        <name>ATP</name>
        <dbReference type="ChEBI" id="CHEBI:30616"/>
        <label>2</label>
    </ligand>
</feature>
<dbReference type="EMBL" id="BX294148">
    <property type="protein sequence ID" value="CAD76084.1"/>
    <property type="status" value="ALT_INIT"/>
    <property type="molecule type" value="Genomic_DNA"/>
</dbReference>
<dbReference type="RefSeq" id="NP_868707.1">
    <property type="nucleotide sequence ID" value="NC_005027.1"/>
</dbReference>
<dbReference type="RefSeq" id="WP_164922205.1">
    <property type="nucleotide sequence ID" value="NC_005027.1"/>
</dbReference>
<dbReference type="SMR" id="Q7UM33"/>
<dbReference type="FunCoup" id="Q7UM33">
    <property type="interactions" value="482"/>
</dbReference>
<dbReference type="STRING" id="243090.RB9103"/>
<dbReference type="EnsemblBacteria" id="CAD76084">
    <property type="protein sequence ID" value="CAD76084"/>
    <property type="gene ID" value="RB9103"/>
</dbReference>
<dbReference type="KEGG" id="rba:RB9103"/>
<dbReference type="PATRIC" id="fig|243090.15.peg.4362"/>
<dbReference type="eggNOG" id="COG0542">
    <property type="taxonomic scope" value="Bacteria"/>
</dbReference>
<dbReference type="HOGENOM" id="CLU_005070_4_0_0"/>
<dbReference type="InParanoid" id="Q7UM33"/>
<dbReference type="OrthoDB" id="9803641at2"/>
<dbReference type="Proteomes" id="UP000001025">
    <property type="component" value="Chromosome"/>
</dbReference>
<dbReference type="GO" id="GO:0005737">
    <property type="term" value="C:cytoplasm"/>
    <property type="evidence" value="ECO:0000318"/>
    <property type="project" value="GO_Central"/>
</dbReference>
<dbReference type="GO" id="GO:0005524">
    <property type="term" value="F:ATP binding"/>
    <property type="evidence" value="ECO:0007669"/>
    <property type="project" value="UniProtKB-KW"/>
</dbReference>
<dbReference type="GO" id="GO:0016887">
    <property type="term" value="F:ATP hydrolysis activity"/>
    <property type="evidence" value="ECO:0000318"/>
    <property type="project" value="GO_Central"/>
</dbReference>
<dbReference type="GO" id="GO:0034605">
    <property type="term" value="P:cellular response to heat"/>
    <property type="evidence" value="ECO:0000318"/>
    <property type="project" value="GO_Central"/>
</dbReference>
<dbReference type="GO" id="GO:0042026">
    <property type="term" value="P:protein refolding"/>
    <property type="evidence" value="ECO:0007669"/>
    <property type="project" value="InterPro"/>
</dbReference>
<dbReference type="CDD" id="cd00009">
    <property type="entry name" value="AAA"/>
    <property type="match status" value="1"/>
</dbReference>
<dbReference type="CDD" id="cd19499">
    <property type="entry name" value="RecA-like_ClpB_Hsp104-like"/>
    <property type="match status" value="1"/>
</dbReference>
<dbReference type="FunFam" id="1.10.8.60:FF:000017">
    <property type="entry name" value="ATP-dependent chaperone ClpB"/>
    <property type="match status" value="1"/>
</dbReference>
<dbReference type="FunFam" id="3.40.50.300:FF:000120">
    <property type="entry name" value="ATP-dependent chaperone ClpB"/>
    <property type="match status" value="1"/>
</dbReference>
<dbReference type="FunFam" id="3.40.50.300:FF:000025">
    <property type="entry name" value="ATP-dependent Clp protease subunit"/>
    <property type="match status" value="1"/>
</dbReference>
<dbReference type="FunFam" id="3.40.50.300:FF:000010">
    <property type="entry name" value="Chaperone clpB 1, putative"/>
    <property type="match status" value="1"/>
</dbReference>
<dbReference type="Gene3D" id="1.10.8.60">
    <property type="match status" value="1"/>
</dbReference>
<dbReference type="Gene3D" id="1.10.1780.10">
    <property type="entry name" value="Clp, N-terminal domain"/>
    <property type="match status" value="1"/>
</dbReference>
<dbReference type="Gene3D" id="3.40.50.300">
    <property type="entry name" value="P-loop containing nucleotide triphosphate hydrolases"/>
    <property type="match status" value="3"/>
</dbReference>
<dbReference type="InterPro" id="IPR003593">
    <property type="entry name" value="AAA+_ATPase"/>
</dbReference>
<dbReference type="InterPro" id="IPR003959">
    <property type="entry name" value="ATPase_AAA_core"/>
</dbReference>
<dbReference type="InterPro" id="IPR017730">
    <property type="entry name" value="Chaperonin_ClpB"/>
</dbReference>
<dbReference type="InterPro" id="IPR019489">
    <property type="entry name" value="Clp_ATPase_C"/>
</dbReference>
<dbReference type="InterPro" id="IPR036628">
    <property type="entry name" value="Clp_N_dom_sf"/>
</dbReference>
<dbReference type="InterPro" id="IPR004176">
    <property type="entry name" value="Clp_R_dom"/>
</dbReference>
<dbReference type="InterPro" id="IPR001270">
    <property type="entry name" value="ClpA/B"/>
</dbReference>
<dbReference type="InterPro" id="IPR018368">
    <property type="entry name" value="ClpA/B_CS1"/>
</dbReference>
<dbReference type="InterPro" id="IPR028299">
    <property type="entry name" value="ClpA/B_CS2"/>
</dbReference>
<dbReference type="InterPro" id="IPR041546">
    <property type="entry name" value="ClpA/ClpB_AAA_lid"/>
</dbReference>
<dbReference type="InterPro" id="IPR050130">
    <property type="entry name" value="ClpA_ClpB"/>
</dbReference>
<dbReference type="InterPro" id="IPR027417">
    <property type="entry name" value="P-loop_NTPase"/>
</dbReference>
<dbReference type="NCBIfam" id="TIGR03346">
    <property type="entry name" value="chaperone_ClpB"/>
    <property type="match status" value="1"/>
</dbReference>
<dbReference type="PANTHER" id="PTHR11638">
    <property type="entry name" value="ATP-DEPENDENT CLP PROTEASE"/>
    <property type="match status" value="1"/>
</dbReference>
<dbReference type="PANTHER" id="PTHR11638:SF18">
    <property type="entry name" value="HEAT SHOCK PROTEIN 104"/>
    <property type="match status" value="1"/>
</dbReference>
<dbReference type="Pfam" id="PF00004">
    <property type="entry name" value="AAA"/>
    <property type="match status" value="1"/>
</dbReference>
<dbReference type="Pfam" id="PF07724">
    <property type="entry name" value="AAA_2"/>
    <property type="match status" value="1"/>
</dbReference>
<dbReference type="Pfam" id="PF17871">
    <property type="entry name" value="AAA_lid_9"/>
    <property type="match status" value="1"/>
</dbReference>
<dbReference type="Pfam" id="PF02861">
    <property type="entry name" value="Clp_N"/>
    <property type="match status" value="2"/>
</dbReference>
<dbReference type="Pfam" id="PF10431">
    <property type="entry name" value="ClpB_D2-small"/>
    <property type="match status" value="1"/>
</dbReference>
<dbReference type="PRINTS" id="PR00300">
    <property type="entry name" value="CLPPROTEASEA"/>
</dbReference>
<dbReference type="SMART" id="SM00382">
    <property type="entry name" value="AAA"/>
    <property type="match status" value="2"/>
</dbReference>
<dbReference type="SMART" id="SM01086">
    <property type="entry name" value="ClpB_D2-small"/>
    <property type="match status" value="1"/>
</dbReference>
<dbReference type="SUPFAM" id="SSF81923">
    <property type="entry name" value="Double Clp-N motif"/>
    <property type="match status" value="1"/>
</dbReference>
<dbReference type="SUPFAM" id="SSF52540">
    <property type="entry name" value="P-loop containing nucleoside triphosphate hydrolases"/>
    <property type="match status" value="2"/>
</dbReference>
<dbReference type="PROSITE" id="PS51903">
    <property type="entry name" value="CLP_R"/>
    <property type="match status" value="1"/>
</dbReference>
<dbReference type="PROSITE" id="PS00870">
    <property type="entry name" value="CLPAB_1"/>
    <property type="match status" value="1"/>
</dbReference>
<dbReference type="PROSITE" id="PS00871">
    <property type="entry name" value="CLPAB_2"/>
    <property type="match status" value="1"/>
</dbReference>